<evidence type="ECO:0000305" key="1"/>
<accession>P33227</accession>
<accession>P75986</accession>
<dbReference type="EMBL" id="U00096">
    <property type="status" value="NOT_ANNOTATED_CDS"/>
    <property type="molecule type" value="Genomic_DNA"/>
</dbReference>
<dbReference type="EMBL" id="AP009048">
    <property type="status" value="NOT_ANNOTATED_CDS"/>
    <property type="molecule type" value="Genomic_DNA"/>
</dbReference>
<dbReference type="EMBL" id="X01805">
    <property type="status" value="NOT_ANNOTATED_CDS"/>
    <property type="molecule type" value="Genomic_DNA"/>
</dbReference>
<dbReference type="PIR" id="B64861">
    <property type="entry name" value="B64861"/>
</dbReference>
<dbReference type="RefSeq" id="WP_001115524.1">
    <property type="nucleotide sequence ID" value="NZ_CP064677.1"/>
</dbReference>
<dbReference type="SMR" id="P33227"/>
<dbReference type="FunCoup" id="P33227">
    <property type="interactions" value="36"/>
</dbReference>
<dbReference type="EchoBASE" id="EB1765"/>
<dbReference type="InParanoid" id="P33227"/>
<dbReference type="PhylomeDB" id="P33227"/>
<dbReference type="Proteomes" id="UP000000625">
    <property type="component" value="Chromosome"/>
</dbReference>
<dbReference type="Gene3D" id="3.90.1340.10">
    <property type="entry name" value="Phage tail collar domain"/>
    <property type="match status" value="1"/>
</dbReference>
<dbReference type="InterPro" id="IPR011083">
    <property type="entry name" value="Phage_tail_collar_dom"/>
</dbReference>
<dbReference type="InterPro" id="IPR037053">
    <property type="entry name" value="Phage_tail_collar_dom_sf"/>
</dbReference>
<dbReference type="InterPro" id="IPR051934">
    <property type="entry name" value="Phage_Tail_Fiber_Structural"/>
</dbReference>
<dbReference type="PANTHER" id="PTHR35191">
    <property type="entry name" value="PROPHAGE SIDE TAIL FIBER PROTEIN HOMOLOG STFQ-RELATED"/>
    <property type="match status" value="1"/>
</dbReference>
<dbReference type="PANTHER" id="PTHR35191:SF1">
    <property type="entry name" value="PROPHAGE SIDE TAIL FIBER PROTEIN HOMOLOG STFQ-RELATED"/>
    <property type="match status" value="1"/>
</dbReference>
<dbReference type="Pfam" id="PF07484">
    <property type="entry name" value="Collar"/>
    <property type="match status" value="1"/>
</dbReference>
<dbReference type="SUPFAM" id="SSF88874">
    <property type="entry name" value="Receptor-binding domain of short tail fibre protein gp12"/>
    <property type="match status" value="1"/>
</dbReference>
<protein>
    <recommendedName>
        <fullName>Putative uncharacterized protein StfE</fullName>
    </recommendedName>
    <alternativeName>
        <fullName>Side tail fiber protein homolog from lambdoid prophage e14</fullName>
    </alternativeName>
</protein>
<sequence>MPFACYFFIFINVGLGEGSALPVGVPVPWPSATPPTGWLKCNGAAFSAEEYPELAKAYPTNKLPDLRGEFIRGWDDGRGIDTGRSILSIQGYATEDHAHGLPSRSTIVTDATINFYFDEIWVNSGTDIIKRGNTNDAGLPAPDYGTFKTYKQSVDGLGAAASETRPRNIAFNYIVRAA</sequence>
<keyword id="KW-1185">Reference proteome</keyword>
<keyword id="KW-0677">Repeat</keyword>
<proteinExistence type="uncertain"/>
<organism>
    <name type="scientific">Escherichia coli (strain K12)</name>
    <dbReference type="NCBI Taxonomy" id="83333"/>
    <lineage>
        <taxon>Bacteria</taxon>
        <taxon>Pseudomonadati</taxon>
        <taxon>Pseudomonadota</taxon>
        <taxon>Gammaproteobacteria</taxon>
        <taxon>Enterobacterales</taxon>
        <taxon>Enterobacteriaceae</taxon>
        <taxon>Escherichia</taxon>
    </lineage>
</organism>
<reference key="1">
    <citation type="journal article" date="1996" name="DNA Res.">
        <title>A 718-kb DNA sequence of the Escherichia coli K-12 genome corresponding to the 12.7-28.0 min region on the linkage map.</title>
        <authorList>
            <person name="Oshima T."/>
            <person name="Aiba H."/>
            <person name="Baba T."/>
            <person name="Fujita K."/>
            <person name="Hayashi K."/>
            <person name="Honjo A."/>
            <person name="Ikemoto K."/>
            <person name="Inada T."/>
            <person name="Itoh T."/>
            <person name="Kajihara M."/>
            <person name="Kanai K."/>
            <person name="Kashimoto K."/>
            <person name="Kimura S."/>
            <person name="Kitagawa M."/>
            <person name="Makino K."/>
            <person name="Masuda S."/>
            <person name="Miki T."/>
            <person name="Mizobuchi K."/>
            <person name="Mori H."/>
            <person name="Motomura K."/>
            <person name="Nakamura Y."/>
            <person name="Nashimoto H."/>
            <person name="Nishio Y."/>
            <person name="Saito N."/>
            <person name="Sampei G."/>
            <person name="Seki Y."/>
            <person name="Tagami H."/>
            <person name="Takemoto K."/>
            <person name="Wada C."/>
            <person name="Yamamoto Y."/>
            <person name="Yano M."/>
            <person name="Horiuchi T."/>
        </authorList>
    </citation>
    <scope>NUCLEOTIDE SEQUENCE [LARGE SCALE GENOMIC DNA]</scope>
    <source>
        <strain>K12 / W3110 / ATCC 27325 / DSM 5911</strain>
    </source>
</reference>
<reference key="2">
    <citation type="journal article" date="1997" name="Science">
        <title>The complete genome sequence of Escherichia coli K-12.</title>
        <authorList>
            <person name="Blattner F.R."/>
            <person name="Plunkett G. III"/>
            <person name="Bloch C.A."/>
            <person name="Perna N.T."/>
            <person name="Burland V."/>
            <person name="Riley M."/>
            <person name="Collado-Vides J."/>
            <person name="Glasner J.D."/>
            <person name="Rode C.K."/>
            <person name="Mayhew G.F."/>
            <person name="Gregor J."/>
            <person name="Davis N.W."/>
            <person name="Kirkpatrick H.A."/>
            <person name="Goeden M.A."/>
            <person name="Rose D.J."/>
            <person name="Mau B."/>
            <person name="Shao Y."/>
        </authorList>
    </citation>
    <scope>NUCLEOTIDE SEQUENCE [LARGE SCALE GENOMIC DNA]</scope>
    <source>
        <strain>K12 / MG1655 / ATCC 47076</strain>
    </source>
</reference>
<reference key="3">
    <citation type="journal article" date="2006" name="Mol. Syst. Biol.">
        <title>Highly accurate genome sequences of Escherichia coli K-12 strains MG1655 and W3110.</title>
        <authorList>
            <person name="Hayashi K."/>
            <person name="Morooka N."/>
            <person name="Yamamoto Y."/>
            <person name="Fujita K."/>
            <person name="Isono K."/>
            <person name="Choi S."/>
            <person name="Ohtsubo E."/>
            <person name="Baba T."/>
            <person name="Wanner B.L."/>
            <person name="Mori H."/>
            <person name="Horiuchi T."/>
        </authorList>
    </citation>
    <scope>NUCLEOTIDE SEQUENCE [LARGE SCALE GENOMIC DNA]</scope>
    <source>
        <strain>K12 / W3110 / ATCC 27325 / DSM 5911</strain>
    </source>
</reference>
<reference key="4">
    <citation type="journal article" date="1985" name="EMBO J.">
        <title>The invertible P-DNA segment in the chromosome of Escherichia coli.</title>
        <authorList>
            <person name="Plasterk R.H.A."/>
            <person name="van de Putte P."/>
        </authorList>
    </citation>
    <scope>NUCLEOTIDE SEQUENCE [GENOMIC DNA] OF 14-178</scope>
    <source>
        <strain>K12</strain>
    </source>
</reference>
<comment type="similarity">
    <text evidence="1">Belongs to the tail fiber family.</text>
</comment>
<comment type="caution">
    <text evidence="1">Could be the product of a pseudogene.</text>
</comment>
<comment type="sequence caution" evidence="1">
    <conflict type="frameshift">
        <sequence resource="EMBL" id="X01805"/>
    </conflict>
</comment>
<feature type="chain" id="PRO_0000077741" description="Putative uncharacterized protein StfE">
    <location>
        <begin position="1"/>
        <end position="178"/>
    </location>
</feature>
<name>STFE_ECOLI</name>
<gene>
    <name type="primary">stfE</name>
    <name type="ordered locus">b1157</name>
    <name type="ordered locus">JW5172</name>
</gene>